<sequence>MDFQQLADVAEKWCSSTPFELIAAEETERRMDFYADPGVSFYVLCPDNGCGDSFHVWSESEDCLPFLQLAQDYISSCGKKTLHEVLEKVFKSFRPLLGLPDADDDAFEEYSADVEEEEPEADHPQMGVSQQ</sequence>
<gene>
    <name type="primary">Mturn</name>
</gene>
<keyword id="KW-0963">Cytoplasm</keyword>
<keyword id="KW-0217">Developmental protein</keyword>
<keyword id="KW-0597">Phosphoprotein</keyword>
<keyword id="KW-1185">Reference proteome</keyword>
<name>MTURN_MOUSE</name>
<protein>
    <recommendedName>
        <fullName>Maturin</fullName>
    </recommendedName>
    <alternativeName>
        <fullName>Maturin neural progenitor differentiation regulator protein homolog</fullName>
    </alternativeName>
</protein>
<evidence type="ECO:0000250" key="1">
    <source>
        <dbReference type="UniProtKB" id="Q7ZX36"/>
    </source>
</evidence>
<evidence type="ECO:0000250" key="2">
    <source>
        <dbReference type="UniProtKB" id="Q8N3F0"/>
    </source>
</evidence>
<evidence type="ECO:0000256" key="3">
    <source>
        <dbReference type="SAM" id="MobiDB-lite"/>
    </source>
</evidence>
<evidence type="ECO:0000269" key="4">
    <source>
    </source>
</evidence>
<evidence type="ECO:0000269" key="5">
    <source>
    </source>
</evidence>
<evidence type="ECO:0000305" key="6"/>
<dbReference type="EMBL" id="BC042507">
    <property type="protein sequence ID" value="AAH42507.1"/>
    <property type="molecule type" value="mRNA"/>
</dbReference>
<dbReference type="EMBL" id="BC052467">
    <property type="protein sequence ID" value="AAH52467.1"/>
    <property type="molecule type" value="mRNA"/>
</dbReference>
<dbReference type="CCDS" id="CCDS20158.2"/>
<dbReference type="RefSeq" id="NP_001276669.1">
    <property type="nucleotide sequence ID" value="NM_001289740.1"/>
</dbReference>
<dbReference type="RefSeq" id="NP_001276670.1">
    <property type="nucleotide sequence ID" value="NM_001289741.1"/>
</dbReference>
<dbReference type="BioGRID" id="212752">
    <property type="interactions" value="1"/>
</dbReference>
<dbReference type="FunCoup" id="Q8CGA4">
    <property type="interactions" value="683"/>
</dbReference>
<dbReference type="STRING" id="10090.ENSMUSP00000140358"/>
<dbReference type="iPTMnet" id="Q8CGA4"/>
<dbReference type="PhosphoSitePlus" id="Q8CGA4"/>
<dbReference type="PaxDb" id="10090-ENSMUSP00000140358"/>
<dbReference type="ProteomicsDB" id="287639"/>
<dbReference type="Pumba" id="Q8CGA4"/>
<dbReference type="Antibodypedia" id="35235">
    <property type="antibodies" value="8 antibodies from 7 providers"/>
</dbReference>
<dbReference type="Ensembl" id="ENSMUST00000190641.7">
    <property type="protein sequence ID" value="ENSMUSP00000140586.2"/>
    <property type="gene ID" value="ENSMUSG00000038065.14"/>
</dbReference>
<dbReference type="GeneID" id="68235"/>
<dbReference type="KEGG" id="mmu:68235"/>
<dbReference type="UCSC" id="uc009cad.2">
    <property type="organism name" value="mouse"/>
</dbReference>
<dbReference type="AGR" id="MGI:1915485"/>
<dbReference type="CTD" id="222166"/>
<dbReference type="MGI" id="MGI:1915485">
    <property type="gene designation" value="Mturn"/>
</dbReference>
<dbReference type="VEuPathDB" id="HostDB:ENSMUSG00000038065"/>
<dbReference type="eggNOG" id="ENOG502RXQA">
    <property type="taxonomic scope" value="Eukaryota"/>
</dbReference>
<dbReference type="GeneTree" id="ENSGT00500000045044"/>
<dbReference type="HOGENOM" id="CLU_163056_0_0_1"/>
<dbReference type="InParanoid" id="Q8CGA4"/>
<dbReference type="OrthoDB" id="9922400at2759"/>
<dbReference type="BioGRID-ORCS" id="68235">
    <property type="hits" value="0 hits in 60 CRISPR screens"/>
</dbReference>
<dbReference type="ChiTaRS" id="Mturn">
    <property type="organism name" value="mouse"/>
</dbReference>
<dbReference type="PRO" id="PR:Q8CGA4"/>
<dbReference type="Proteomes" id="UP000000589">
    <property type="component" value="Chromosome 6"/>
</dbReference>
<dbReference type="RNAct" id="Q8CGA4">
    <property type="molecule type" value="protein"/>
</dbReference>
<dbReference type="Bgee" id="ENSMUSG00000038065">
    <property type="expression patterns" value="Expressed in cortical plate and 218 other cell types or tissues"/>
</dbReference>
<dbReference type="ExpressionAtlas" id="Q8CGA4">
    <property type="expression patterns" value="baseline and differential"/>
</dbReference>
<dbReference type="GO" id="GO:0005737">
    <property type="term" value="C:cytoplasm"/>
    <property type="evidence" value="ECO:0000250"/>
    <property type="project" value="UniProtKB"/>
</dbReference>
<dbReference type="GO" id="GO:0032088">
    <property type="term" value="P:negative regulation of NF-kappaB transcription factor activity"/>
    <property type="evidence" value="ECO:0000250"/>
    <property type="project" value="UniProtKB"/>
</dbReference>
<dbReference type="GO" id="GO:0048666">
    <property type="term" value="P:neuron development"/>
    <property type="evidence" value="ECO:0000250"/>
    <property type="project" value="MGI"/>
</dbReference>
<dbReference type="GO" id="GO:0070374">
    <property type="term" value="P:positive regulation of ERK1 and ERK2 cascade"/>
    <property type="evidence" value="ECO:0000250"/>
    <property type="project" value="UniProtKB"/>
</dbReference>
<dbReference type="GO" id="GO:0046330">
    <property type="term" value="P:positive regulation of JNK cascade"/>
    <property type="evidence" value="ECO:0000250"/>
    <property type="project" value="UniProtKB"/>
</dbReference>
<dbReference type="GO" id="GO:0045654">
    <property type="term" value="P:positive regulation of megakaryocyte differentiation"/>
    <property type="evidence" value="ECO:0000315"/>
    <property type="project" value="UniProtKB"/>
</dbReference>
<dbReference type="InterPro" id="IPR027892">
    <property type="entry name" value="Maturin"/>
</dbReference>
<dbReference type="PANTHER" id="PTHR32008">
    <property type="entry name" value="MATURIN"/>
    <property type="match status" value="1"/>
</dbReference>
<dbReference type="PANTHER" id="PTHR32008:SF2">
    <property type="entry name" value="MATURIN"/>
    <property type="match status" value="1"/>
</dbReference>
<dbReference type="Pfam" id="PF15167">
    <property type="entry name" value="DUF4581"/>
    <property type="match status" value="1"/>
</dbReference>
<accession>Q8CGA4</accession>
<comment type="function">
    <text evidence="1 5">Promotes megakaryocyte differentiation by enhancing ERK and JNK signaling as well as up-regulating RUNX1 and FLI1 expression (PubMed:24681962). Represses NF-kappa-B transcriptional activity by inhibiting phosphorylation of RELA at 'Ser- 536' (By similarity). May be involved in early neuronal development (By similarity).</text>
</comment>
<comment type="subcellular location">
    <subcellularLocation>
        <location evidence="2">Cytoplasm</location>
    </subcellularLocation>
</comment>
<comment type="tissue specificity">
    <text evidence="5">Expressed in the thymus, bone marrow and spleen.</text>
</comment>
<comment type="developmental stage">
    <text evidence="4">Expressed in embryo throughout the early nervous system. Strongly expressed in differentiating neurons in the brain, spinal cord and retina. Not detected in the lens at any developmental stage tested.</text>
</comment>
<comment type="PTM">
    <text evidence="2">Phosphorylation at Tyr-34 is essential for its ability to promote megakaryocyte differentiation.</text>
</comment>
<comment type="similarity">
    <text evidence="6">Belongs to the MTURN family.</text>
</comment>
<reference key="1">
    <citation type="journal article" date="2004" name="Genome Res.">
        <title>The status, quality, and expansion of the NIH full-length cDNA project: the Mammalian Gene Collection (MGC).</title>
        <authorList>
            <consortium name="The MGC Project Team"/>
        </authorList>
    </citation>
    <scope>NUCLEOTIDE SEQUENCE [LARGE SCALE MRNA]</scope>
    <source>
        <strain>C57BL/6J</strain>
        <strain>FVB/N</strain>
        <tissue>Brain</tissue>
        <tissue>Kidney</tissue>
    </source>
</reference>
<reference key="2">
    <citation type="journal article" date="2010" name="Cell">
        <title>A tissue-specific atlas of mouse protein phosphorylation and expression.</title>
        <authorList>
            <person name="Huttlin E.L."/>
            <person name="Jedrychowski M.P."/>
            <person name="Elias J.E."/>
            <person name="Goswami T."/>
            <person name="Rad R."/>
            <person name="Beausoleil S.A."/>
            <person name="Villen J."/>
            <person name="Haas W."/>
            <person name="Sowa M.E."/>
            <person name="Gygi S.P."/>
        </authorList>
    </citation>
    <scope>IDENTIFICATION BY MASS SPECTROMETRY [LARGE SCALE ANALYSIS]</scope>
    <source>
        <tissue>Brain</tissue>
        <tissue>Kidney</tissue>
    </source>
</reference>
<reference key="3">
    <citation type="journal article" date="2013" name="Dev. Biol.">
        <title>Maturin is a novel protein required for differentiation during primary neurogenesis.</title>
        <authorList>
            <person name="Martinez-De Luna R.I."/>
            <person name="Ku R.Y."/>
            <person name="Lyou Y."/>
            <person name="Zuber M.E."/>
        </authorList>
    </citation>
    <scope>DEVELOPMENTAL STAGE</scope>
</reference>
<reference key="4">
    <citation type="journal article" date="2014" name="Blood Cancer J.">
        <title>Novel function of the chromosome 7 open reading frame 41 gene to promote leukemic megakaryocyte differentiation by modulating TPA-induced signaling.</title>
        <authorList>
            <person name="Sun X."/>
            <person name="Lu B."/>
            <person name="Hu B."/>
            <person name="Xiao W."/>
            <person name="Li W."/>
            <person name="Huang Z."/>
        </authorList>
    </citation>
    <scope>FUNCTION</scope>
    <scope>TISSUE SPECIFICITY</scope>
</reference>
<organism>
    <name type="scientific">Mus musculus</name>
    <name type="common">Mouse</name>
    <dbReference type="NCBI Taxonomy" id="10090"/>
    <lineage>
        <taxon>Eukaryota</taxon>
        <taxon>Metazoa</taxon>
        <taxon>Chordata</taxon>
        <taxon>Craniata</taxon>
        <taxon>Vertebrata</taxon>
        <taxon>Euteleostomi</taxon>
        <taxon>Mammalia</taxon>
        <taxon>Eutheria</taxon>
        <taxon>Euarchontoglires</taxon>
        <taxon>Glires</taxon>
        <taxon>Rodentia</taxon>
        <taxon>Myomorpha</taxon>
        <taxon>Muroidea</taxon>
        <taxon>Muridae</taxon>
        <taxon>Murinae</taxon>
        <taxon>Mus</taxon>
        <taxon>Mus</taxon>
    </lineage>
</organism>
<proteinExistence type="evidence at protein level"/>
<feature type="chain" id="PRO_0000294234" description="Maturin">
    <location>
        <begin position="1"/>
        <end position="131"/>
    </location>
</feature>
<feature type="region of interest" description="Disordered" evidence="3">
    <location>
        <begin position="107"/>
        <end position="131"/>
    </location>
</feature>
<feature type="compositionally biased region" description="Acidic residues" evidence="3">
    <location>
        <begin position="107"/>
        <end position="120"/>
    </location>
</feature>
<feature type="modified residue" description="Phosphotyrosine" evidence="2">
    <location>
        <position position="34"/>
    </location>
</feature>